<accession>P05811</accession>
<reference key="1">
    <citation type="journal article" date="1985" name="Proc. Natl. Acad. Sci. U.S.A.">
        <title>Complete structure of the alpha B-crystallin gene: conservation of the exon-intron distribution in the two nonlinked alpha-crystallin genes.</title>
        <authorList>
            <person name="Quax-Jeuken Y."/>
            <person name="Quax W."/>
            <person name="van Rens G."/>
            <person name="Khan P.M."/>
            <person name="Bloemendal H."/>
        </authorList>
    </citation>
    <scope>NUCLEOTIDE SEQUENCE [GENOMIC DNA]</scope>
</reference>
<feature type="chain" id="PRO_0000125909" description="Alpha-crystallin B chain">
    <location>
        <begin position="1"/>
        <end position="175"/>
    </location>
</feature>
<feature type="domain" description="sHSP" evidence="6">
    <location>
        <begin position="56"/>
        <end position="164"/>
    </location>
</feature>
<feature type="region of interest" description="Disordered" evidence="7">
    <location>
        <begin position="145"/>
        <end position="175"/>
    </location>
</feature>
<feature type="binding site" evidence="1">
    <location>
        <position position="83"/>
    </location>
    <ligand>
        <name>Zn(2+)</name>
        <dbReference type="ChEBI" id="CHEBI:29105"/>
        <label>1</label>
    </ligand>
</feature>
<feature type="binding site" evidence="1">
    <location>
        <position position="104"/>
    </location>
    <ligand>
        <name>Zn(2+)</name>
        <dbReference type="ChEBI" id="CHEBI:29105"/>
        <label>2</label>
    </ligand>
</feature>
<feature type="binding site" evidence="1">
    <location>
        <position position="106"/>
    </location>
    <ligand>
        <name>Zn(2+)</name>
        <dbReference type="ChEBI" id="CHEBI:29105"/>
        <label>2</label>
    </ligand>
</feature>
<feature type="binding site" evidence="1">
    <location>
        <position position="111"/>
    </location>
    <ligand>
        <name>Zn(2+)</name>
        <dbReference type="ChEBI" id="CHEBI:29105"/>
        <label>1</label>
    </ligand>
</feature>
<feature type="binding site" evidence="1">
    <location>
        <position position="119"/>
    </location>
    <ligand>
        <name>Zn(2+)</name>
        <dbReference type="ChEBI" id="CHEBI:29105"/>
        <label>1</label>
    </ligand>
</feature>
<feature type="modified residue" description="N-acetylmethionine" evidence="2 8">
    <location>
        <position position="1"/>
    </location>
</feature>
<feature type="modified residue" description="Phosphoserine" evidence="2">
    <location>
        <position position="19"/>
    </location>
</feature>
<feature type="modified residue" description="Phosphoserine" evidence="2">
    <location>
        <position position="45"/>
    </location>
</feature>
<feature type="modified residue" description="Phosphoserine" evidence="2">
    <location>
        <position position="59"/>
    </location>
</feature>
<feature type="modified residue" description="N6-acetyllysine" evidence="3">
    <location>
        <position position="92"/>
    </location>
</feature>
<feature type="modified residue" description="N6-acetyllysine" evidence="3">
    <location>
        <position position="166"/>
    </location>
</feature>
<feature type="glycosylation site" description="O-linked (GlcNAc) threonine" evidence="5">
    <location>
        <position position="170"/>
    </location>
</feature>
<protein>
    <recommendedName>
        <fullName>Alpha-crystallin B chain</fullName>
    </recommendedName>
    <alternativeName>
        <fullName>Alpha(B)-crystallin</fullName>
    </alternativeName>
</protein>
<keyword id="KW-0007">Acetylation</keyword>
<keyword id="KW-0143">Chaperone</keyword>
<keyword id="KW-0963">Cytoplasm</keyword>
<keyword id="KW-0273">Eye lens protein</keyword>
<keyword id="KW-0325">Glycoprotein</keyword>
<keyword id="KW-0458">Lysosome</keyword>
<keyword id="KW-0479">Metal-binding</keyword>
<keyword id="KW-0488">Methylation</keyword>
<keyword id="KW-0539">Nucleus</keyword>
<keyword id="KW-0597">Phosphoprotein</keyword>
<keyword id="KW-1185">Reference proteome</keyword>
<keyword id="KW-0964">Secreted</keyword>
<keyword id="KW-0862">Zinc</keyword>
<organism>
    <name type="scientific">Mesocricetus auratus</name>
    <name type="common">Golden hamster</name>
    <dbReference type="NCBI Taxonomy" id="10036"/>
    <lineage>
        <taxon>Eukaryota</taxon>
        <taxon>Metazoa</taxon>
        <taxon>Chordata</taxon>
        <taxon>Craniata</taxon>
        <taxon>Vertebrata</taxon>
        <taxon>Euteleostomi</taxon>
        <taxon>Mammalia</taxon>
        <taxon>Eutheria</taxon>
        <taxon>Euarchontoglires</taxon>
        <taxon>Glires</taxon>
        <taxon>Rodentia</taxon>
        <taxon>Myomorpha</taxon>
        <taxon>Muroidea</taxon>
        <taxon>Cricetidae</taxon>
        <taxon>Cricetinae</taxon>
        <taxon>Mesocricetus</taxon>
    </lineage>
</organism>
<gene>
    <name type="primary">CRYAB</name>
</gene>
<name>CRYAB_MESAU</name>
<dbReference type="EMBL" id="M12016">
    <property type="protein sequence ID" value="AAA37067.1"/>
    <property type="molecule type" value="Genomic_DNA"/>
</dbReference>
<dbReference type="EMBL" id="M12014">
    <property type="protein sequence ID" value="AAA37067.1"/>
    <property type="status" value="JOINED"/>
    <property type="molecule type" value="Genomic_DNA"/>
</dbReference>
<dbReference type="EMBL" id="M12015">
    <property type="protein sequence ID" value="AAA37067.1"/>
    <property type="status" value="JOINED"/>
    <property type="molecule type" value="Genomic_DNA"/>
</dbReference>
<dbReference type="RefSeq" id="XP_012968459.1">
    <property type="nucleotide sequence ID" value="XM_013113005.1"/>
</dbReference>
<dbReference type="SMR" id="P05811"/>
<dbReference type="STRING" id="10036.ENSMAUP00000020383"/>
<dbReference type="GlyCosmos" id="P05811">
    <property type="glycosylation" value="1 site, No reported glycans"/>
</dbReference>
<dbReference type="Ensembl" id="ENSMAUT00000024372">
    <property type="protein sequence ID" value="ENSMAUP00000020383"/>
    <property type="gene ID" value="ENSMAUG00000018431"/>
</dbReference>
<dbReference type="GeneID" id="101827485"/>
<dbReference type="KEGG" id="maua:101827485"/>
<dbReference type="CTD" id="1410"/>
<dbReference type="eggNOG" id="KOG3591">
    <property type="taxonomic scope" value="Eukaryota"/>
</dbReference>
<dbReference type="OrthoDB" id="1431247at2759"/>
<dbReference type="Proteomes" id="UP000189706">
    <property type="component" value="Unplaced"/>
</dbReference>
<dbReference type="GO" id="GO:0005737">
    <property type="term" value="C:cytoplasm"/>
    <property type="evidence" value="ECO:0000250"/>
    <property type="project" value="UniProtKB"/>
</dbReference>
<dbReference type="GO" id="GO:0005829">
    <property type="term" value="C:cytosol"/>
    <property type="evidence" value="ECO:0007669"/>
    <property type="project" value="Ensembl"/>
</dbReference>
<dbReference type="GO" id="GO:0005576">
    <property type="term" value="C:extracellular region"/>
    <property type="evidence" value="ECO:0007669"/>
    <property type="project" value="UniProtKB-SubCell"/>
</dbReference>
<dbReference type="GO" id="GO:0005764">
    <property type="term" value="C:lysosome"/>
    <property type="evidence" value="ECO:0007669"/>
    <property type="project" value="UniProtKB-SubCell"/>
</dbReference>
<dbReference type="GO" id="GO:0005739">
    <property type="term" value="C:mitochondrion"/>
    <property type="evidence" value="ECO:0007669"/>
    <property type="project" value="Ensembl"/>
</dbReference>
<dbReference type="GO" id="GO:0005634">
    <property type="term" value="C:nucleus"/>
    <property type="evidence" value="ECO:0000250"/>
    <property type="project" value="UniProtKB"/>
</dbReference>
<dbReference type="GO" id="GO:0005886">
    <property type="term" value="C:plasma membrane"/>
    <property type="evidence" value="ECO:0007669"/>
    <property type="project" value="Ensembl"/>
</dbReference>
<dbReference type="GO" id="GO:0032991">
    <property type="term" value="C:protein-containing complex"/>
    <property type="evidence" value="ECO:0000250"/>
    <property type="project" value="UniProtKB"/>
</dbReference>
<dbReference type="GO" id="GO:0030018">
    <property type="term" value="C:Z disc"/>
    <property type="evidence" value="ECO:0007669"/>
    <property type="project" value="Ensembl"/>
</dbReference>
<dbReference type="GO" id="GO:0001540">
    <property type="term" value="F:amyloid-beta binding"/>
    <property type="evidence" value="ECO:0007669"/>
    <property type="project" value="Ensembl"/>
</dbReference>
<dbReference type="GO" id="GO:0046872">
    <property type="term" value="F:metal ion binding"/>
    <property type="evidence" value="ECO:0007669"/>
    <property type="project" value="UniProtKB-KW"/>
</dbReference>
<dbReference type="GO" id="GO:0042803">
    <property type="term" value="F:protein homodimerization activity"/>
    <property type="evidence" value="ECO:0000250"/>
    <property type="project" value="UniProtKB"/>
</dbReference>
<dbReference type="GO" id="GO:0044877">
    <property type="term" value="F:protein-containing complex binding"/>
    <property type="evidence" value="ECO:0007669"/>
    <property type="project" value="Ensembl"/>
</dbReference>
<dbReference type="GO" id="GO:0005212">
    <property type="term" value="F:structural constituent of eye lens"/>
    <property type="evidence" value="ECO:0007669"/>
    <property type="project" value="UniProtKB-KW"/>
</dbReference>
<dbReference type="GO" id="GO:0051082">
    <property type="term" value="F:unfolded protein binding"/>
    <property type="evidence" value="ECO:0007669"/>
    <property type="project" value="Ensembl"/>
</dbReference>
<dbReference type="GO" id="GO:0060561">
    <property type="term" value="P:apoptotic process involved in morphogenesis"/>
    <property type="evidence" value="ECO:0007669"/>
    <property type="project" value="Ensembl"/>
</dbReference>
<dbReference type="GO" id="GO:0071480">
    <property type="term" value="P:cellular response to gamma radiation"/>
    <property type="evidence" value="ECO:0007669"/>
    <property type="project" value="Ensembl"/>
</dbReference>
<dbReference type="GO" id="GO:0002088">
    <property type="term" value="P:lens development in camera-type eye"/>
    <property type="evidence" value="ECO:0007669"/>
    <property type="project" value="Ensembl"/>
</dbReference>
<dbReference type="GO" id="GO:0007517">
    <property type="term" value="P:muscle organ development"/>
    <property type="evidence" value="ECO:0007669"/>
    <property type="project" value="Ensembl"/>
</dbReference>
<dbReference type="GO" id="GO:1905907">
    <property type="term" value="P:negative regulation of amyloid fibril formation"/>
    <property type="evidence" value="ECO:0007669"/>
    <property type="project" value="Ensembl"/>
</dbReference>
<dbReference type="GO" id="GO:0043066">
    <property type="term" value="P:negative regulation of apoptotic process"/>
    <property type="evidence" value="ECO:0007669"/>
    <property type="project" value="Ensembl"/>
</dbReference>
<dbReference type="GO" id="GO:0045892">
    <property type="term" value="P:negative regulation of DNA-templated transcription"/>
    <property type="evidence" value="ECO:0000250"/>
    <property type="project" value="UniProtKB"/>
</dbReference>
<dbReference type="GO" id="GO:0010629">
    <property type="term" value="P:negative regulation of gene expression"/>
    <property type="evidence" value="ECO:0007669"/>
    <property type="project" value="Ensembl"/>
</dbReference>
<dbReference type="GO" id="GO:0032387">
    <property type="term" value="P:negative regulation of intracellular transport"/>
    <property type="evidence" value="ECO:0007669"/>
    <property type="project" value="Ensembl"/>
</dbReference>
<dbReference type="GO" id="GO:0031333">
    <property type="term" value="P:negative regulation of protein-containing complex assembly"/>
    <property type="evidence" value="ECO:0007669"/>
    <property type="project" value="Ensembl"/>
</dbReference>
<dbReference type="GO" id="GO:0042026">
    <property type="term" value="P:protein refolding"/>
    <property type="evidence" value="ECO:0007669"/>
    <property type="project" value="TreeGrafter"/>
</dbReference>
<dbReference type="GO" id="GO:0050821">
    <property type="term" value="P:protein stabilization"/>
    <property type="evidence" value="ECO:0007669"/>
    <property type="project" value="Ensembl"/>
</dbReference>
<dbReference type="GO" id="GO:0009408">
    <property type="term" value="P:response to heat"/>
    <property type="evidence" value="ECO:0007669"/>
    <property type="project" value="TreeGrafter"/>
</dbReference>
<dbReference type="GO" id="GO:0042542">
    <property type="term" value="P:response to hydrogen peroxide"/>
    <property type="evidence" value="ECO:0007669"/>
    <property type="project" value="Ensembl"/>
</dbReference>
<dbReference type="GO" id="GO:0001666">
    <property type="term" value="P:response to hypoxia"/>
    <property type="evidence" value="ECO:0007669"/>
    <property type="project" value="Ensembl"/>
</dbReference>
<dbReference type="GO" id="GO:0007021">
    <property type="term" value="P:tubulin complex assembly"/>
    <property type="evidence" value="ECO:0007669"/>
    <property type="project" value="Ensembl"/>
</dbReference>
<dbReference type="CDD" id="cd06498">
    <property type="entry name" value="ACD_alphaB-crystallin_HspB5"/>
    <property type="match status" value="1"/>
</dbReference>
<dbReference type="FunFam" id="2.60.40.790:FF:000011">
    <property type="entry name" value="Alpha-crystallin B chain"/>
    <property type="match status" value="1"/>
</dbReference>
<dbReference type="Gene3D" id="2.60.40.790">
    <property type="match status" value="1"/>
</dbReference>
<dbReference type="InterPro" id="IPR002068">
    <property type="entry name" value="A-crystallin/Hsp20_dom"/>
</dbReference>
<dbReference type="InterPro" id="IPR037882">
    <property type="entry name" value="ACD_alphaB-crystallin"/>
</dbReference>
<dbReference type="InterPro" id="IPR055269">
    <property type="entry name" value="Alpha-crystallin/HSP_16"/>
</dbReference>
<dbReference type="InterPro" id="IPR001436">
    <property type="entry name" value="Alpha-crystallin/sHSP_animal"/>
</dbReference>
<dbReference type="InterPro" id="IPR003090">
    <property type="entry name" value="Alpha-crystallin_N"/>
</dbReference>
<dbReference type="InterPro" id="IPR008978">
    <property type="entry name" value="HSP20-like_chaperone"/>
</dbReference>
<dbReference type="PANTHER" id="PTHR45640:SF5">
    <property type="entry name" value="ALPHA-CRYSTALLIN B CHAIN"/>
    <property type="match status" value="1"/>
</dbReference>
<dbReference type="PANTHER" id="PTHR45640">
    <property type="entry name" value="HEAT SHOCK PROTEIN HSP-12.2-RELATED"/>
    <property type="match status" value="1"/>
</dbReference>
<dbReference type="Pfam" id="PF00525">
    <property type="entry name" value="Crystallin"/>
    <property type="match status" value="1"/>
</dbReference>
<dbReference type="Pfam" id="PF00011">
    <property type="entry name" value="HSP20"/>
    <property type="match status" value="1"/>
</dbReference>
<dbReference type="PIRSF" id="PIRSF036514">
    <property type="entry name" value="Sm_HSP_B1"/>
    <property type="match status" value="1"/>
</dbReference>
<dbReference type="PRINTS" id="PR00299">
    <property type="entry name" value="ACRYSTALLIN"/>
</dbReference>
<dbReference type="SUPFAM" id="SSF49764">
    <property type="entry name" value="HSP20-like chaperones"/>
    <property type="match status" value="1"/>
</dbReference>
<dbReference type="PROSITE" id="PS01031">
    <property type="entry name" value="SHSP"/>
    <property type="match status" value="1"/>
</dbReference>
<evidence type="ECO:0000250" key="1"/>
<evidence type="ECO:0000250" key="2">
    <source>
        <dbReference type="UniProtKB" id="P02510"/>
    </source>
</evidence>
<evidence type="ECO:0000250" key="3">
    <source>
        <dbReference type="UniProtKB" id="P02511"/>
    </source>
</evidence>
<evidence type="ECO:0000250" key="4">
    <source>
        <dbReference type="UniProtKB" id="P23927"/>
    </source>
</evidence>
<evidence type="ECO:0000250" key="5">
    <source>
        <dbReference type="UniProtKB" id="P23928"/>
    </source>
</evidence>
<evidence type="ECO:0000255" key="6">
    <source>
        <dbReference type="PROSITE-ProRule" id="PRU00285"/>
    </source>
</evidence>
<evidence type="ECO:0000256" key="7">
    <source>
        <dbReference type="SAM" id="MobiDB-lite"/>
    </source>
</evidence>
<evidence type="ECO:0000305" key="8"/>
<proteinExistence type="evidence at transcript level"/>
<sequence length="175" mass="20075">MDIAIHHPWIRRPFFPFHSPSRLFDQFFGEHLLESDLFSTATSLSPFYLRPPSFLRAPSWIDTGLSEMRMEKDRFSVNLDVKHFSPEELKVKVLGDVVEVHGKHEERQDEHGFISREFHRKYRIPADVDPLTITSSLSSDGVLTVNGPRKQASGPERTIPITREEKPAVTAAPKK</sequence>
<comment type="function">
    <text evidence="4">May contribute to the transparency and refractive index of the lens. Has chaperone-like activity, preventing aggregation of various proteins under a wide range of stress conditions. In lens epithelial cells, stabilizes the ATP6V1A protein, preventing its degradation by the proteasome (By similarity).</text>
</comment>
<comment type="subunit">
    <text evidence="3 4">Heteromer composed of three CRYAA and one CRYAB subunits. Aggregates with homologous proteins, including the small heat shock protein HSPB1, to form large heteromeric complexes. Inter-subunit bridging via zinc ions enhances stability, which is crucial as there is no protein turn over in the lens. Interacts with HSPBAP1 and TTN/titin. Interacts with TMEM109; in the cellular response to DNA damage. Interacts with DES; binds rapidly during early stages of DES filament assembly and a reduced binding seen in the later stages. Interacts with TMED10; the interaction mediates the translocation from the cytoplasm into the ERGIC (endoplasmic reticulum-Golgi intermediate compartment) and thereby secretion. Interacts with ATP6V1A and with MTOR, forming a ternary complex (By similarity).</text>
</comment>
<comment type="subcellular location">
    <subcellularLocation>
        <location evidence="3">Cytoplasm</location>
    </subcellularLocation>
    <subcellularLocation>
        <location evidence="3">Nucleus</location>
    </subcellularLocation>
    <subcellularLocation>
        <location evidence="3">Secreted</location>
    </subcellularLocation>
    <subcellularLocation>
        <location evidence="4">Lysosome</location>
    </subcellularLocation>
    <text evidence="3">Translocates to the nucleus during heat shock and resides in sub-nuclear structures known as SC35 speckles or nuclear splicing speckles. Localizes at the Z-bands and the intercalated disk in cardiomyocytes. Can be secreted; the secretion is dependent on protein unfolding and facilitated by the cargo receptor TMED10; it results in protein translocation from the cytoplasm into the ERGIC (endoplasmic reticulum-Golgi intermediate compartment) followed by vesicle entry and secretion.</text>
</comment>
<comment type="tissue specificity">
    <text>Lens as well as other tissues.</text>
</comment>
<comment type="similarity">
    <text evidence="6">Belongs to the small heat shock protein (HSP20) family.</text>
</comment>